<proteinExistence type="inferred from homology"/>
<sequence>MEIKILKSERNYLELEIEGEDHTLGNLIAGTLRKISGVSFASYYQPHPLTDKIIVKILTDGSIAPKDALLKAIETVRVMASHYIDEIKGLSK</sequence>
<reference key="1">
    <citation type="journal article" date="2009" name="Proc. Natl. Acad. Sci. U.S.A.">
        <title>Biogeography of the Sulfolobus islandicus pan-genome.</title>
        <authorList>
            <person name="Reno M.L."/>
            <person name="Held N.L."/>
            <person name="Fields C.J."/>
            <person name="Burke P.V."/>
            <person name="Whitaker R.J."/>
        </authorList>
    </citation>
    <scope>NUCLEOTIDE SEQUENCE [LARGE SCALE GENOMIC DNA]</scope>
    <source>
        <strain>Y.N.15.51 / Yellowstone #2</strain>
    </source>
</reference>
<protein>
    <recommendedName>
        <fullName evidence="1">DNA-directed RNA polymerase subunit Rpo11</fullName>
        <ecNumber evidence="1">2.7.7.6</ecNumber>
    </recommendedName>
    <alternativeName>
        <fullName evidence="1">DNA-directed RNA polymerase subunit L</fullName>
    </alternativeName>
</protein>
<accession>C3NFY8</accession>
<organism>
    <name type="scientific">Saccharolobus islandicus (strain Y.N.15.51 / Yellowstone #2)</name>
    <name type="common">Sulfolobus islandicus</name>
    <dbReference type="NCBI Taxonomy" id="419942"/>
    <lineage>
        <taxon>Archaea</taxon>
        <taxon>Thermoproteota</taxon>
        <taxon>Thermoprotei</taxon>
        <taxon>Sulfolobales</taxon>
        <taxon>Sulfolobaceae</taxon>
        <taxon>Saccharolobus</taxon>
    </lineage>
</organism>
<evidence type="ECO:0000255" key="1">
    <source>
        <dbReference type="HAMAP-Rule" id="MF_00261"/>
    </source>
</evidence>
<comment type="function">
    <text evidence="1">DNA-dependent RNA polymerase (RNAP) catalyzes the transcription of DNA into RNA using the four ribonucleoside triphosphates as substrates.</text>
</comment>
<comment type="catalytic activity">
    <reaction evidence="1">
        <text>RNA(n) + a ribonucleoside 5'-triphosphate = RNA(n+1) + diphosphate</text>
        <dbReference type="Rhea" id="RHEA:21248"/>
        <dbReference type="Rhea" id="RHEA-COMP:14527"/>
        <dbReference type="Rhea" id="RHEA-COMP:17342"/>
        <dbReference type="ChEBI" id="CHEBI:33019"/>
        <dbReference type="ChEBI" id="CHEBI:61557"/>
        <dbReference type="ChEBI" id="CHEBI:140395"/>
        <dbReference type="EC" id="2.7.7.6"/>
    </reaction>
</comment>
<comment type="subunit">
    <text evidence="1">Part of the RNA polymerase complex.</text>
</comment>
<comment type="subcellular location">
    <subcellularLocation>
        <location evidence="1">Cytoplasm</location>
    </subcellularLocation>
</comment>
<comment type="similarity">
    <text evidence="1">Belongs to the archaeal Rpo11/eukaryotic RPB11/RPC19 RNA polymerase subunit family.</text>
</comment>
<keyword id="KW-0963">Cytoplasm</keyword>
<keyword id="KW-0240">DNA-directed RNA polymerase</keyword>
<keyword id="KW-0548">Nucleotidyltransferase</keyword>
<keyword id="KW-0804">Transcription</keyword>
<keyword id="KW-0808">Transferase</keyword>
<name>RPO11_SACI1</name>
<gene>
    <name evidence="1" type="primary">rpo11</name>
    <name evidence="1" type="synonym">rpoL</name>
    <name type="ordered locus">YN1551_0999</name>
</gene>
<dbReference type="EC" id="2.7.7.6" evidence="1"/>
<dbReference type="EMBL" id="CP001404">
    <property type="protein sequence ID" value="ACP48106.1"/>
    <property type="molecule type" value="Genomic_DNA"/>
</dbReference>
<dbReference type="RefSeq" id="WP_012711784.1">
    <property type="nucleotide sequence ID" value="NC_012623.1"/>
</dbReference>
<dbReference type="SMR" id="C3NFY8"/>
<dbReference type="KEGG" id="sin:YN1551_0999"/>
<dbReference type="HOGENOM" id="CLU_090381_5_1_2"/>
<dbReference type="Proteomes" id="UP000006818">
    <property type="component" value="Chromosome"/>
</dbReference>
<dbReference type="GO" id="GO:0005737">
    <property type="term" value="C:cytoplasm"/>
    <property type="evidence" value="ECO:0007669"/>
    <property type="project" value="UniProtKB-SubCell"/>
</dbReference>
<dbReference type="GO" id="GO:0000428">
    <property type="term" value="C:DNA-directed RNA polymerase complex"/>
    <property type="evidence" value="ECO:0007669"/>
    <property type="project" value="UniProtKB-KW"/>
</dbReference>
<dbReference type="GO" id="GO:0003677">
    <property type="term" value="F:DNA binding"/>
    <property type="evidence" value="ECO:0007669"/>
    <property type="project" value="InterPro"/>
</dbReference>
<dbReference type="GO" id="GO:0003899">
    <property type="term" value="F:DNA-directed RNA polymerase activity"/>
    <property type="evidence" value="ECO:0007669"/>
    <property type="project" value="UniProtKB-UniRule"/>
</dbReference>
<dbReference type="GO" id="GO:0046983">
    <property type="term" value="F:protein dimerization activity"/>
    <property type="evidence" value="ECO:0007669"/>
    <property type="project" value="InterPro"/>
</dbReference>
<dbReference type="GO" id="GO:0006351">
    <property type="term" value="P:DNA-templated transcription"/>
    <property type="evidence" value="ECO:0007669"/>
    <property type="project" value="UniProtKB-UniRule"/>
</dbReference>
<dbReference type="Gene3D" id="3.30.1360.10">
    <property type="entry name" value="RNA polymerase, RBP11-like subunit"/>
    <property type="match status" value="1"/>
</dbReference>
<dbReference type="HAMAP" id="MF_00261">
    <property type="entry name" value="RNApol_arch_Rpo11"/>
    <property type="match status" value="1"/>
</dbReference>
<dbReference type="InterPro" id="IPR036603">
    <property type="entry name" value="RBP11-like"/>
</dbReference>
<dbReference type="InterPro" id="IPR009025">
    <property type="entry name" value="RBP11-like_dimer"/>
</dbReference>
<dbReference type="InterPro" id="IPR008193">
    <property type="entry name" value="RNA_pol_Rpb11_13-16kDa_CS"/>
</dbReference>
<dbReference type="InterPro" id="IPR022905">
    <property type="entry name" value="Rpo11-like"/>
</dbReference>
<dbReference type="NCBIfam" id="NF002233">
    <property type="entry name" value="PRK01146.1-1"/>
    <property type="match status" value="1"/>
</dbReference>
<dbReference type="PANTHER" id="PTHR13946">
    <property type="entry name" value="DNA-DIRECTED RNA POLYMERASE I,II,III"/>
    <property type="match status" value="1"/>
</dbReference>
<dbReference type="PANTHER" id="PTHR13946:SF28">
    <property type="entry name" value="DNA-DIRECTED RNA POLYMERASES I AND III SUBUNIT RPAC2"/>
    <property type="match status" value="1"/>
</dbReference>
<dbReference type="Pfam" id="PF13656">
    <property type="entry name" value="RNA_pol_L_2"/>
    <property type="match status" value="1"/>
</dbReference>
<dbReference type="SUPFAM" id="SSF55257">
    <property type="entry name" value="RBP11-like subunits of RNA polymerase"/>
    <property type="match status" value="1"/>
</dbReference>
<dbReference type="PROSITE" id="PS01154">
    <property type="entry name" value="RNA_POL_L_13KD"/>
    <property type="match status" value="1"/>
</dbReference>
<feature type="chain" id="PRO_1000204672" description="DNA-directed RNA polymerase subunit Rpo11">
    <location>
        <begin position="1"/>
        <end position="92"/>
    </location>
</feature>